<keyword id="KW-1003">Cell membrane</keyword>
<keyword id="KW-0966">Cell projection</keyword>
<keyword id="KW-0268">Exocytosis</keyword>
<keyword id="KW-0407">Ion channel</keyword>
<keyword id="KW-0406">Ion transport</keyword>
<keyword id="KW-1017">Isopeptide bond</keyword>
<keyword id="KW-0472">Membrane</keyword>
<keyword id="KW-0597">Phosphoprotein</keyword>
<keyword id="KW-0628">Postsynaptic cell membrane</keyword>
<keyword id="KW-0630">Potassium</keyword>
<keyword id="KW-0631">Potassium channel</keyword>
<keyword id="KW-0633">Potassium transport</keyword>
<keyword id="KW-1185">Reference proteome</keyword>
<keyword id="KW-0770">Synapse</keyword>
<keyword id="KW-0771">Synaptosome</keyword>
<keyword id="KW-0812">Transmembrane</keyword>
<keyword id="KW-1133">Transmembrane helix</keyword>
<keyword id="KW-0813">Transport</keyword>
<keyword id="KW-0832">Ubl conjugation</keyword>
<keyword id="KW-0851">Voltage-gated channel</keyword>
<accession>Q9MZ19</accession>
<protein>
    <recommendedName>
        <fullName evidence="4">Potassium voltage-gated channel subfamily B member 1</fullName>
    </recommendedName>
    <alternativeName>
        <fullName>Voltage-gated potassium channel subunit Kv2.1</fullName>
    </alternativeName>
</protein>
<evidence type="ECO:0000250" key="1">
    <source>
        <dbReference type="UniProtKB" id="P15387"/>
    </source>
</evidence>
<evidence type="ECO:0000250" key="2">
    <source>
        <dbReference type="UniProtKB" id="P63142"/>
    </source>
</evidence>
<evidence type="ECO:0000250" key="3">
    <source>
        <dbReference type="UniProtKB" id="Q03717"/>
    </source>
</evidence>
<evidence type="ECO:0000250" key="4">
    <source>
        <dbReference type="UniProtKB" id="Q14721"/>
    </source>
</evidence>
<evidence type="ECO:0000256" key="5">
    <source>
        <dbReference type="SAM" id="MobiDB-lite"/>
    </source>
</evidence>
<evidence type="ECO:0000305" key="6"/>
<evidence type="ECO:0000305" key="7">
    <source>
    </source>
</evidence>
<evidence type="ECO:0000305" key="8">
    <source>
    </source>
</evidence>
<comment type="function">
    <text evidence="1 3 4">Voltage-gated potassium channel that mediates transmembrane potassium transport in excitable membranes, primarily in the brain, but also in the pancreas and cardiovascular system. Contributes to the regulation of the action potential (AP) repolarization, duration and frequency of repetitive AP firing in neurons, muscle cells and endocrine cells and plays a role in homeostatic attenuation of electrical excitability throughout the brain. Also plays a role in the regulation of exocytosis independently of its electrical function. Forms tetrameric potassium-selective channels through which potassium ions pass in accordance with their electrochemical gradient. The channel alternates between opened and closed conformations in response to the voltage difference across the membrane. Homotetrameric channels mediate a delayed-rectifier voltage-dependent outward potassium current that display rapid activation and slow inactivation in response to membrane depolarization. Can form functional homotetrameric and heterotetrameric channels that contain variable proportions of KCNB2; channel properties depend on the type of alpha subunits that are part of the channel. Can also form functional heterotetrameric channels with other alpha subunits that are non-conducting when expressed alone, such as KCNF1, KCNG1, KCNG3, KCNG4, KCNH1, KCNH2, KCNS1, KCNS2, KCNS3 and KCNV1, creating a functionally diverse range of channel complexes (By similarity). Heterotetrameric channel activity formed with KCNS3 show increased current amplitude with the threshold for action potential activation shifted towards more negative values in hypoxic-treated pulmonary artery smooth muscle cells. Channel properties are also modulated by cytoplasmic ancillary beta subunits, such as AMIGO1, KCNE1, KCNE2 and KCNE3, slowing activation and inactivation rate of the delayed rectifier potassium channels. In vivo, membranes probably contain a mixture of heteromeric potassium channel complexes, making it difficult to assign currents observed in intact tissues to any particular potassium channel family member. Major contributor to the delayed-rectifier voltage-gated potassium current in neurons of the central nervous system, sympathetic ganglion neurons, neuroendocrine cells, pancreatic beta cells, cardiomyocytes and smooth muscle. Mediates the major part of the somatodendritic delayed-rectifier potassium current in hippocampal and cortical pyramidal neurons and sympathetic superior cervical ganglion (CGC) neurons that acts to slow down periods of firing, especially during high frequency stimulation. Plays a role in the induction of long-term potentiation (LTP) of neuron excitability in the CA3 layer of the hippocampus. Contributes to the regulation of the glucose-induced amplitude and duration of action potentials in pancreatic beta-cells, hence limiting calcium influx and insulin secretion. Plays a role in the regulation of resting membrane potential and contraction in hypoxia-treated pulmonary artery smooth muscle cells. May contribute to the regulation of the duration of both the action potential of cardiomyocytes and the heart ventricular repolarization QT interval. Contributes to the pronounced pro-apoptotic potassium current surge during neuronal apoptotic cell death in response to oxidative injury. May confer neuroprotection in response to hypoxia/ischemic insults by suppressing pyramidal neurons hyperexcitability in hippocampal and cortical regions. Promotes trafficking of KCNG3, KCNH1 and KCNH2 to the cell surface membrane, presumably by forming heterotetrameric channels with these subunits. Plays a role in the calcium-dependent recruitment and release of fusion-competent vesicles from the soma of neurons, neuroendocrine and glucose-induced pancreatic beta cells by binding key components of the fusion machinery in a pore-independent manner.</text>
</comment>
<comment type="catalytic activity">
    <reaction evidence="4">
        <text>K(+)(in) = K(+)(out)</text>
        <dbReference type="Rhea" id="RHEA:29463"/>
        <dbReference type="ChEBI" id="CHEBI:29103"/>
    </reaction>
</comment>
<comment type="activity regulation">
    <text evidence="7 8">Inhibited by 12.7 nM stromatoxin 1 (ScTx1), a spider venom toxin of the tarantula S.calceata. Inhibited by 42 nM hanatoxin 1 (HaTx1), a spider venom toxin of the tarantula G.spatulata. Modestly sensitive to millimolar levels of tetraethylammonium (TEA). Modestly sensitive to millimolar levels of 4-aminopyridine (4-AP). Completely insensitive to toxins such as dendrotoxin (DTX) and charybdotoxin (CTX).</text>
</comment>
<comment type="biophysicochemical properties">
    <kinetics>
        <text evidence="7 8">Homotetrameric channels expressed in xenopus oocytes or in mammalian non-neuronal cells display delayed-rectifier voltage-dependent potassium currents which are activated during membrane depolarization, i.e within a risetime of more than 20 msec. After that, inactivate very slowly, i.e within more than 5 sec. Their activation requires low threshold potentials at about -20 to -30 mV with a midpoint activation at about 10 mV. For inactivation, the voltage at half-maximal amplitude is about -20 mV. The time constant for recovery after inactivation is about 1.6 sec. Channels have an unitary conductance of about 8 pS. The voltage-dependence of activation and inactivation and other channel characteristics vary depending on the experimental conditions, the expression system, the presence or absence of ancillary subunits and post-translational modifications.</text>
    </kinetics>
</comment>
<comment type="subunit">
    <text evidence="1 3 4">Homotetramer or heterotetramer with KCNB2. Heterotetramer with non-conducting channel-forming alpha subunits such as KCNF1, KCNG1, KCNG3, KCNG4, KCNH1, KCNH2, KCNS1, KCNS2, KCNS3 and KCNV1. Channel activity is regulated by association with ancillary beta subunits such as AMIGO1, KCNE1, KCNE2 and KCNE3. Interacts with KCNV2 (By similarity). Self-associates (via N-terminus and C-terminus); self-association is required to regulate trafficking, gating and C-terminal phosphorylation-dependent modulation of the channel. Interacts (via C-terminus) with STX1A (via C-terminus); this decreases the rate of channel activation and increases the rate of channel inactivation in pancreatic beta cells, also induces neuronal apoptosis in response to oxidative injury as well as pore-independent enhancement of exocytosis in neuroendocrine cells, chromaffin cells, pancreatic beta cells and from the soma of dorsal root ganglia (DRG) neurons. Interacts (via N-terminus) with SNAP25; this decreases the rate of channel inactivation in pancreatic beta cells and also increases interaction during neuronal apoptosis in a N-methyl-D-aspartate receptor (NMDAR)-dependent manner. Interacts (via N-terminus and C-terminus) with VAMP2 (via N-terminus); stimulates channel inactivation rate. Interacts with CREB1; this promotes channel acetylation in response to stimulation by incretin hormones. Interacts (via N-terminus and C-terminus) with MYL12B. Interacts (via N-terminus) with PIAS3; this increases the number of functional channels at the cell surface. Interacts with SUMO1. Interacts (via phosphorylated form) with PTPRE; this reduces phosphorylation and channel activity in heterologous cells. Interacts (via phosphorylated FFAT motif) with VAPA and VAPB (By similarity).</text>
</comment>
<comment type="subcellular location">
    <subcellularLocation>
        <location evidence="1">Cell membrane</location>
    </subcellularLocation>
    <subcellularLocation>
        <location evidence="1">Perikaryon</location>
    </subcellularLocation>
    <subcellularLocation>
        <location evidence="1">Cell projection</location>
        <location evidence="1">Axon</location>
    </subcellularLocation>
    <subcellularLocation>
        <location evidence="1">Cell projection</location>
        <location evidence="1">Dendrite</location>
    </subcellularLocation>
    <subcellularLocation>
        <location>Membrane</location>
        <topology>Multi-pass membrane protein</topology>
    </subcellularLocation>
    <subcellularLocation>
        <location evidence="1">Postsynaptic cell membrane</location>
    </subcellularLocation>
    <subcellularLocation>
        <location evidence="1">Synapse</location>
    </subcellularLocation>
    <subcellularLocation>
        <location evidence="1">Synapse</location>
        <location evidence="1">Synaptosome</location>
    </subcellularLocation>
    <subcellularLocation>
        <location evidence="1">Lateral cell membrane</location>
    </subcellularLocation>
    <subcellularLocation>
        <location evidence="1">Cell membrane</location>
        <location evidence="1">Sarcolemma</location>
    </subcellularLocation>
    <text evidence="1 3 4">Localizes to high-density somatodendritic clusters and non-clustered sites on the surface of neocortical and hippocampal pyramidal neurons in a cortical actin cytoskeleton-dependent manner. Also localizes to high-density clusters in the axon initial segment (AIS), at ankyrin-G-deficient sites, on the surface of neocortical and hippocampal pyramidal neurons. KCNB1-containing AIS clusters localize either in close apposition to smooth endoplasmic reticulum cisternal organelles or with GABA-A receptor-containing synapses of hippocampal and cortical pyramidal neurons, respectively. Localizes to high-density clusters on the cell surface of atrial and ventricular myocytes and at the lateral plasma membrane in epithelial cells. Localizes both to the axial and transverse tubules (T tubule) and sarcolemma in ventricular myocytes. Associated with lipid raft domains. In cortical neurons, apoptotic injuries induce de novo plasma membrane insertion in a SNARE-dependent manner causing an apoptotic potassium current surge.</text>
</comment>
<comment type="domain">
    <text evidence="2">The transmembrane segment S4 functions as a voltage-sensor and is characterized by a series of positively charged amino acids at every third position. Channel opening and closing is effected by a conformation change that affects the position and orientation of the voltage-sensor paddle formed by S3 and S4 within the membrane. A transmembrane electric field that is positive inside would push the positively charged S4 segment outwards, thereby opening the pore, while a field that is negative inside would pull the S4 segment inwards and close the pore. Changes in the position and orientation of S4 are then transmitted to the activation gate formed by the inner helix bundle via the S4-S5 linker region.</text>
</comment>
<comment type="domain">
    <text evidence="1 4">The N-terminal and C-terminal cytoplasmic regions mediate homooligomerization; self-association is required to regulate trafficking, gating and C-terminal phosphorylation-dependent modulation of the channel. The N-terminal cytoplasmic region is important for interaction with other channel-forming alpha subunits and with ancillary beta subunits. The C-terminus is necessary and sufficient for the restricted localization to, and clustering within, both in soma and proximal portions of dendrite of neurons and in lateral membrane of non-neuronal polarized cells. The C-terminus is both necessary and sufficient as a mediator of cholinergic and calcium-stimulated modulation of channel cell membrane clustering localization and activity in hippocampal neurons.</text>
</comment>
<comment type="domain">
    <text evidence="4">The FFAT motif is involved in the interaction with VAPA and VAPB and its phosphorylation regulates these interactions.</text>
</comment>
<comment type="PTM">
    <text evidence="1 3 4">Phosphorylated. Differential C-terminal phosphorylation on a subset of serines allows graded activity-dependent regulation of channel gating in hippocampal neurons. Ser-607 and Tyr-128 are significant sites of voltage-gated regulation through phosphorylation/dephosphorylation activities. Tyr-128 can be phosphorylated by Src and dephosphorylated by cytoplasmic form of the phosphatase PTPRE. CDK5-induced Ser-607 phosphorylation increases in response to acute blockade of neuronal activity. Phosphorylated on Tyr-128 by Src and on Ser-805 by MAPK14/P38MAPK; phosphorylations are necessary and sufficient for an increase in plasma membrane insertion, apoptotic potassium current surge and completion of the neuronal cell death program. Phosphorylated on Ser-520, Ser-607, Ser-656 and Ser-805 by CDK5; phosphorylation is necessary for KCNB1 channel clustering formation. The Ser-607 phosphorylation state differs between KCNB1-containing clusters on the proximal and distal portions of the axon initial segment (AIS). Highly phosphorylated on serine residues in the C-terminal cytoplasmic tail in resting neurons. Phosphorylated in pancreatic beta cells in response to incretin hormones stimulation in a PKA- and RPS6KA5/MSK1-dependent signaling pathway, promoting beta cell survival. Phosphorylation on Ser-567 is reduced during postnatal development with low levels at P2 and P5; levels then increase to reach adult levels by P14. Phosphorylation on Ser-457, Ser-541, Ser-567, Ser-607, Ser-656 and Ser-720 as well as the N-terminal Ser-15 are sensitive to calcineurin-mediated dephosphorylation contributing to the modulation of the voltage-dependent gating properties. Dephosphorylation by phosphatase PTPRE confers neuroprotection by its inhibitory influence on the neuronal apoptotic potassium current surge in a Zn(2+)-dependent manner. Dephosphorylated at Ser-607 by protein phosphatase PPP1CA. Hypoxia-, seizure- or glutamate-induced neuronal activity promote calcium/calcineurin-dependent dephosphorylation resulting in a loss of KCNB1-containing clustering and enhanced channel activity. In response to brain ischemia, Ser-567 and Ser-607 are strongly dephosphorylated while Ser-457 and Ser-720 are less dephosphorylated. In response to brain seizures, phosphorylation levels on Ser-567 and Ser-607 are greatly reduced. Phosphorylated/dephosphorylated by Src or FYN tyrosine-protein kinases and tyrosine phosphatase PTPRE in primary Schwann cells and sciatic nerve tissue. Phosphorylation at Ser-593 of the FFAT motif activates interaction with MOSPD2, VAPA and VAPB (By similarity).</text>
</comment>
<comment type="PTM">
    <text evidence="1">Acetylated. Acetylation occurs in pancreatic beta cells in response to stimulation by incretin hormones in a histone acetyltransferase (HAT)/histone deacetylase (HDAC)-dependent signaling pathway, promoting beta cell survival.</text>
</comment>
<comment type="PTM">
    <text evidence="1 4">Sumoylated on Lys-474, preferentially with SUMO1; sumoylation induces a positive shift in the voltage-dependence of activation and inhibits channel activity. Sumoylation increases the frequency of repetitive action potential firing at the cell surface of hippocampal neurons and decreases its frequency in pancreatic beta cells. Desumoylated by SENP1.</text>
</comment>
<comment type="similarity">
    <text evidence="6">Belongs to the potassium channel family. B (Shab) (TC 1.A.1.2) subfamily. Kv2.1/KCNB1 sub-subfamily.</text>
</comment>
<feature type="chain" id="PRO_0000054045" description="Potassium voltage-gated channel subfamily B member 1">
    <location>
        <begin position="1"/>
        <end position="858"/>
    </location>
</feature>
<feature type="topological domain" description="Cytoplasmic" evidence="2">
    <location>
        <begin position="1"/>
        <end position="186"/>
    </location>
</feature>
<feature type="transmembrane region" description="Helical; Name=Segment S1" evidence="2">
    <location>
        <begin position="187"/>
        <end position="208"/>
    </location>
</feature>
<feature type="topological domain" description="Extracellular" evidence="2">
    <location>
        <begin position="209"/>
        <end position="228"/>
    </location>
</feature>
<feature type="transmembrane region" description="Helical; Name=Segment S2" evidence="2">
    <location>
        <begin position="229"/>
        <end position="250"/>
    </location>
</feature>
<feature type="topological domain" description="Cytoplasmic" evidence="2">
    <location>
        <begin position="251"/>
        <end position="259"/>
    </location>
</feature>
<feature type="transmembrane region" description="Helical; Name=Segment S3" evidence="2">
    <location>
        <begin position="260"/>
        <end position="280"/>
    </location>
</feature>
<feature type="topological domain" description="Extracellular" evidence="2">
    <location>
        <begin position="281"/>
        <end position="294"/>
    </location>
</feature>
<feature type="transmembrane region" description="Helical; Voltage-sensor; Name=Segment S4" evidence="2">
    <location>
        <begin position="295"/>
        <end position="316"/>
    </location>
</feature>
<feature type="topological domain" description="Cytoplasmic" evidence="2">
    <location>
        <begin position="317"/>
        <end position="330"/>
    </location>
</feature>
<feature type="transmembrane region" description="Helical; Name=Segment S5" evidence="2">
    <location>
        <begin position="331"/>
        <end position="351"/>
    </location>
</feature>
<feature type="topological domain" description="Extracellular" evidence="2">
    <location>
        <begin position="352"/>
        <end position="364"/>
    </location>
</feature>
<feature type="intramembrane region" description="Helical; Name=Pore helix" evidence="2">
    <location>
        <begin position="365"/>
        <end position="376"/>
    </location>
</feature>
<feature type="intramembrane region" evidence="2">
    <location>
        <begin position="377"/>
        <end position="384"/>
    </location>
</feature>
<feature type="topological domain" description="Extracellular" evidence="2">
    <location>
        <begin position="385"/>
        <end position="391"/>
    </location>
</feature>
<feature type="transmembrane region" description="Helical; Name=Segment S6" evidence="2">
    <location>
        <begin position="392"/>
        <end position="420"/>
    </location>
</feature>
<feature type="topological domain" description="Cytoplasmic" evidence="2">
    <location>
        <begin position="421"/>
        <end position="858"/>
    </location>
</feature>
<feature type="region of interest" description="Self-association" evidence="1">
    <location>
        <begin position="59"/>
        <end position="75"/>
    </location>
</feature>
<feature type="region of interest" description="Self-association" evidence="1">
    <location>
        <begin position="448"/>
        <end position="481"/>
    </location>
</feature>
<feature type="region of interest" description="Disordered" evidence="5">
    <location>
        <begin position="475"/>
        <end position="524"/>
    </location>
</feature>
<feature type="region of interest" description="Disordered" evidence="5">
    <location>
        <begin position="539"/>
        <end position="574"/>
    </location>
</feature>
<feature type="region of interest" description="Disordered" evidence="5">
    <location>
        <begin position="837"/>
        <end position="858"/>
    </location>
</feature>
<feature type="short sequence motif" description="Selectivity filter" evidence="2">
    <location>
        <begin position="377"/>
        <end position="382"/>
    </location>
</feature>
<feature type="short sequence motif" description="FFAT" evidence="4">
    <location>
        <begin position="590"/>
        <end position="596"/>
    </location>
</feature>
<feature type="compositionally biased region" description="Basic and acidic residues" evidence="5">
    <location>
        <begin position="504"/>
        <end position="516"/>
    </location>
</feature>
<feature type="modified residue" description="Phosphoserine" evidence="1">
    <location>
        <position position="15"/>
    </location>
</feature>
<feature type="modified residue" description="Phosphotyrosine; by Src" evidence="1">
    <location>
        <position position="128"/>
    </location>
</feature>
<feature type="modified residue" description="Phosphoserine" evidence="3">
    <location>
        <position position="444"/>
    </location>
</feature>
<feature type="modified residue" description="Phosphoserine" evidence="3">
    <location>
        <position position="457"/>
    </location>
</feature>
<feature type="modified residue" description="Phosphoserine" evidence="1">
    <location>
        <position position="484"/>
    </location>
</feature>
<feature type="modified residue" description="Phosphoserine" evidence="1">
    <location>
        <position position="496"/>
    </location>
</feature>
<feature type="modified residue" description="Phosphoserine" evidence="1">
    <location>
        <position position="503"/>
    </location>
</feature>
<feature type="modified residue" description="Phosphoserine" evidence="1">
    <location>
        <position position="519"/>
    </location>
</feature>
<feature type="modified residue" description="Phosphoserine; by CDK5; in vitro" evidence="1">
    <location>
        <position position="520"/>
    </location>
</feature>
<feature type="modified residue" description="Phosphoserine" evidence="1">
    <location>
        <position position="541"/>
    </location>
</feature>
<feature type="modified residue" description="Phosphoserine" evidence="1">
    <location>
        <position position="567"/>
    </location>
</feature>
<feature type="modified residue" description="Phosphoserine" evidence="1">
    <location>
        <position position="590"/>
    </location>
</feature>
<feature type="modified residue" description="Phosphoserine" evidence="4">
    <location>
        <position position="593"/>
    </location>
</feature>
<feature type="modified residue" description="Phosphoserine; by CDK5" evidence="1">
    <location>
        <position position="607"/>
    </location>
</feature>
<feature type="modified residue" description="Phosphoserine; by CDK5; in vitro" evidence="1">
    <location>
        <position position="656"/>
    </location>
</feature>
<feature type="modified residue" description="Phosphoserine" evidence="1">
    <location>
        <position position="720"/>
    </location>
</feature>
<feature type="modified residue" description="Phosphoserine" evidence="1">
    <location>
        <position position="772"/>
    </location>
</feature>
<feature type="modified residue" description="Phosphoserine; by CDK5, MAPK14; in vitro" evidence="1">
    <location>
        <position position="805"/>
    </location>
</feature>
<feature type="cross-link" description="Glycyl lysine isopeptide (Lys-Gly) (interchain with G-Cter in SUMO)" evidence="1">
    <location>
        <position position="475"/>
    </location>
</feature>
<organism>
    <name type="scientific">Oryctolagus cuniculus</name>
    <name type="common">Rabbit</name>
    <dbReference type="NCBI Taxonomy" id="9986"/>
    <lineage>
        <taxon>Eukaryota</taxon>
        <taxon>Metazoa</taxon>
        <taxon>Chordata</taxon>
        <taxon>Craniata</taxon>
        <taxon>Vertebrata</taxon>
        <taxon>Euteleostomi</taxon>
        <taxon>Mammalia</taxon>
        <taxon>Eutheria</taxon>
        <taxon>Euarchontoglires</taxon>
        <taxon>Glires</taxon>
        <taxon>Lagomorpha</taxon>
        <taxon>Leporidae</taxon>
        <taxon>Oryctolagus</taxon>
    </lineage>
</organism>
<dbReference type="EMBL" id="AF266507">
    <property type="protein sequence ID" value="AAF77058.1"/>
    <property type="molecule type" value="mRNA"/>
</dbReference>
<dbReference type="RefSeq" id="NP_001075556.1">
    <property type="nucleotide sequence ID" value="NM_001082087.1"/>
</dbReference>
<dbReference type="SMR" id="Q9MZ19"/>
<dbReference type="FunCoup" id="Q9MZ19">
    <property type="interactions" value="64"/>
</dbReference>
<dbReference type="STRING" id="9986.ENSOCUP00000017212"/>
<dbReference type="PaxDb" id="9986-ENSOCUP00000017212"/>
<dbReference type="GeneID" id="100008779"/>
<dbReference type="KEGG" id="ocu:100008779"/>
<dbReference type="CTD" id="3745"/>
<dbReference type="eggNOG" id="KOG3713">
    <property type="taxonomic scope" value="Eukaryota"/>
</dbReference>
<dbReference type="InParanoid" id="Q9MZ19"/>
<dbReference type="OrthoDB" id="296522at2759"/>
<dbReference type="Proteomes" id="UP000001811">
    <property type="component" value="Unplaced"/>
</dbReference>
<dbReference type="GO" id="GO:0030424">
    <property type="term" value="C:axon"/>
    <property type="evidence" value="ECO:0000250"/>
    <property type="project" value="UniProtKB"/>
</dbReference>
<dbReference type="GO" id="GO:0030425">
    <property type="term" value="C:dendrite"/>
    <property type="evidence" value="ECO:0000250"/>
    <property type="project" value="UniProtKB"/>
</dbReference>
<dbReference type="GO" id="GO:0032590">
    <property type="term" value="C:dendrite membrane"/>
    <property type="evidence" value="ECO:0007669"/>
    <property type="project" value="TreeGrafter"/>
</dbReference>
<dbReference type="GO" id="GO:0016328">
    <property type="term" value="C:lateral plasma membrane"/>
    <property type="evidence" value="ECO:0007669"/>
    <property type="project" value="UniProtKB-SubCell"/>
</dbReference>
<dbReference type="GO" id="GO:0032809">
    <property type="term" value="C:neuronal cell body membrane"/>
    <property type="evidence" value="ECO:0000250"/>
    <property type="project" value="UniProtKB"/>
</dbReference>
<dbReference type="GO" id="GO:0043204">
    <property type="term" value="C:perikaryon"/>
    <property type="evidence" value="ECO:0000250"/>
    <property type="project" value="UniProtKB"/>
</dbReference>
<dbReference type="GO" id="GO:0005886">
    <property type="term" value="C:plasma membrane"/>
    <property type="evidence" value="ECO:0000250"/>
    <property type="project" value="UniProtKB"/>
</dbReference>
<dbReference type="GO" id="GO:0045211">
    <property type="term" value="C:postsynaptic membrane"/>
    <property type="evidence" value="ECO:0007669"/>
    <property type="project" value="UniProtKB-SubCell"/>
</dbReference>
<dbReference type="GO" id="GO:0042383">
    <property type="term" value="C:sarcolemma"/>
    <property type="evidence" value="ECO:0007669"/>
    <property type="project" value="UniProtKB-SubCell"/>
</dbReference>
<dbReference type="GO" id="GO:0008076">
    <property type="term" value="C:voltage-gated potassium channel complex"/>
    <property type="evidence" value="ECO:0000250"/>
    <property type="project" value="UniProtKB"/>
</dbReference>
<dbReference type="GO" id="GO:0005251">
    <property type="term" value="F:delayed rectifier potassium channel activity"/>
    <property type="evidence" value="ECO:0000250"/>
    <property type="project" value="UniProtKB"/>
</dbReference>
<dbReference type="GO" id="GO:0046982">
    <property type="term" value="F:protein heterodimerization activity"/>
    <property type="evidence" value="ECO:0000250"/>
    <property type="project" value="UniProtKB"/>
</dbReference>
<dbReference type="GO" id="GO:0001508">
    <property type="term" value="P:action potential"/>
    <property type="evidence" value="ECO:0000250"/>
    <property type="project" value="UniProtKB"/>
</dbReference>
<dbReference type="GO" id="GO:0071333">
    <property type="term" value="P:cellular response to glucose stimulus"/>
    <property type="evidence" value="ECO:0000250"/>
    <property type="project" value="UniProtKB"/>
</dbReference>
<dbReference type="GO" id="GO:0031669">
    <property type="term" value="P:cellular response to nutrient levels"/>
    <property type="evidence" value="ECO:0000250"/>
    <property type="project" value="UniProtKB"/>
</dbReference>
<dbReference type="GO" id="GO:0042593">
    <property type="term" value="P:glucose homeostasis"/>
    <property type="evidence" value="ECO:0000250"/>
    <property type="project" value="UniProtKB"/>
</dbReference>
<dbReference type="GO" id="GO:0007215">
    <property type="term" value="P:glutamate receptor signaling pathway"/>
    <property type="evidence" value="ECO:0000250"/>
    <property type="project" value="UniProtKB"/>
</dbReference>
<dbReference type="GO" id="GO:0046676">
    <property type="term" value="P:negative regulation of insulin secretion"/>
    <property type="evidence" value="ECO:0000250"/>
    <property type="project" value="UniProtKB"/>
</dbReference>
<dbReference type="GO" id="GO:0045956">
    <property type="term" value="P:positive regulation of calcium ion-dependent exocytosis"/>
    <property type="evidence" value="ECO:0000250"/>
    <property type="project" value="UniProtKB"/>
</dbReference>
<dbReference type="GO" id="GO:0033605">
    <property type="term" value="P:positive regulation of catecholamine secretion"/>
    <property type="evidence" value="ECO:0000250"/>
    <property type="project" value="UniProtKB"/>
</dbReference>
<dbReference type="GO" id="GO:1900454">
    <property type="term" value="P:positive regulation of long-term synaptic depression"/>
    <property type="evidence" value="ECO:0000250"/>
    <property type="project" value="UniProtKB"/>
</dbReference>
<dbReference type="GO" id="GO:0010701">
    <property type="term" value="P:positive regulation of norepinephrine secretion"/>
    <property type="evidence" value="ECO:0000250"/>
    <property type="project" value="UniProtKB"/>
</dbReference>
<dbReference type="GO" id="GO:0090314">
    <property type="term" value="P:positive regulation of protein targeting to membrane"/>
    <property type="evidence" value="ECO:0000250"/>
    <property type="project" value="UniProtKB"/>
</dbReference>
<dbReference type="GO" id="GO:0071805">
    <property type="term" value="P:potassium ion transmembrane transport"/>
    <property type="evidence" value="ECO:0000250"/>
    <property type="project" value="UniProtKB"/>
</dbReference>
<dbReference type="GO" id="GO:0006813">
    <property type="term" value="P:potassium ion transport"/>
    <property type="evidence" value="ECO:0000250"/>
    <property type="project" value="UniProtKB"/>
</dbReference>
<dbReference type="GO" id="GO:0051260">
    <property type="term" value="P:protein homooligomerization"/>
    <property type="evidence" value="ECO:0007669"/>
    <property type="project" value="InterPro"/>
</dbReference>
<dbReference type="GO" id="GO:0072659">
    <property type="term" value="P:protein localization to plasma membrane"/>
    <property type="evidence" value="ECO:0000250"/>
    <property type="project" value="UniProtKB"/>
</dbReference>
<dbReference type="GO" id="GO:0098900">
    <property type="term" value="P:regulation of action potential"/>
    <property type="evidence" value="ECO:0000250"/>
    <property type="project" value="UniProtKB"/>
</dbReference>
<dbReference type="GO" id="GO:2000671">
    <property type="term" value="P:regulation of motor neuron apoptotic process"/>
    <property type="evidence" value="ECO:0000250"/>
    <property type="project" value="UniProtKB"/>
</dbReference>
<dbReference type="GO" id="GO:0006904">
    <property type="term" value="P:vesicle docking involved in exocytosis"/>
    <property type="evidence" value="ECO:0000250"/>
    <property type="project" value="UniProtKB"/>
</dbReference>
<dbReference type="CDD" id="cd18412">
    <property type="entry name" value="BTB_POZ_KCNB2"/>
    <property type="match status" value="1"/>
</dbReference>
<dbReference type="FunFam" id="1.10.287.70:FF:000034">
    <property type="entry name" value="Potassium voltage-gated channel subfamily B member"/>
    <property type="match status" value="1"/>
</dbReference>
<dbReference type="FunFam" id="1.20.120.350:FF:000018">
    <property type="entry name" value="Potassium voltage-gated channel subfamily B member"/>
    <property type="match status" value="1"/>
</dbReference>
<dbReference type="FunFam" id="3.30.710.10:FF:000010">
    <property type="entry name" value="Potassium voltage-gated channel subfamily B member"/>
    <property type="match status" value="1"/>
</dbReference>
<dbReference type="Gene3D" id="1.10.287.70">
    <property type="match status" value="1"/>
</dbReference>
<dbReference type="Gene3D" id="3.30.710.10">
    <property type="entry name" value="Potassium Channel Kv1.1, Chain A"/>
    <property type="match status" value="1"/>
</dbReference>
<dbReference type="Gene3D" id="1.20.120.350">
    <property type="entry name" value="Voltage-gated potassium channels. Chain C"/>
    <property type="match status" value="1"/>
</dbReference>
<dbReference type="InterPro" id="IPR000210">
    <property type="entry name" value="BTB/POZ_dom"/>
</dbReference>
<dbReference type="InterPro" id="IPR005821">
    <property type="entry name" value="Ion_trans_dom"/>
</dbReference>
<dbReference type="InterPro" id="IPR003968">
    <property type="entry name" value="K_chnl_volt-dep_Kv"/>
</dbReference>
<dbReference type="InterPro" id="IPR003973">
    <property type="entry name" value="K_chnl_volt-dep_Kv2"/>
</dbReference>
<dbReference type="InterPro" id="IPR004350">
    <property type="entry name" value="K_chnl_volt-dep_Kv2.1"/>
</dbReference>
<dbReference type="InterPro" id="IPR011333">
    <property type="entry name" value="SKP1/BTB/POZ_sf"/>
</dbReference>
<dbReference type="InterPro" id="IPR003131">
    <property type="entry name" value="T1-type_BTB"/>
</dbReference>
<dbReference type="InterPro" id="IPR028325">
    <property type="entry name" value="VG_K_chnl"/>
</dbReference>
<dbReference type="InterPro" id="IPR027359">
    <property type="entry name" value="Volt_channel_dom_sf"/>
</dbReference>
<dbReference type="PANTHER" id="PTHR11537:SF63">
    <property type="entry name" value="POTASSIUM VOLTAGE-GATED CHANNEL SUBFAMILY B MEMBER 1"/>
    <property type="match status" value="1"/>
</dbReference>
<dbReference type="PANTHER" id="PTHR11537">
    <property type="entry name" value="VOLTAGE-GATED POTASSIUM CHANNEL"/>
    <property type="match status" value="1"/>
</dbReference>
<dbReference type="Pfam" id="PF02214">
    <property type="entry name" value="BTB_2"/>
    <property type="match status" value="1"/>
</dbReference>
<dbReference type="Pfam" id="PF00520">
    <property type="entry name" value="Ion_trans"/>
    <property type="match status" value="1"/>
</dbReference>
<dbReference type="Pfam" id="PF03521">
    <property type="entry name" value="Kv2channel"/>
    <property type="match status" value="2"/>
</dbReference>
<dbReference type="PRINTS" id="PR00169">
    <property type="entry name" value="KCHANNEL"/>
</dbReference>
<dbReference type="PRINTS" id="PR01514">
    <property type="entry name" value="KV21CHANNEL"/>
</dbReference>
<dbReference type="PRINTS" id="PR01491">
    <property type="entry name" value="KVCHANNEL"/>
</dbReference>
<dbReference type="PRINTS" id="PR01495">
    <property type="entry name" value="SHABCHANNEL"/>
</dbReference>
<dbReference type="SMART" id="SM00225">
    <property type="entry name" value="BTB"/>
    <property type="match status" value="1"/>
</dbReference>
<dbReference type="SUPFAM" id="SSF54695">
    <property type="entry name" value="POZ domain"/>
    <property type="match status" value="1"/>
</dbReference>
<dbReference type="SUPFAM" id="SSF81324">
    <property type="entry name" value="Voltage-gated potassium channels"/>
    <property type="match status" value="1"/>
</dbReference>
<proteinExistence type="evidence at transcript level"/>
<gene>
    <name evidence="4" type="primary">KCNB1</name>
</gene>
<sequence length="858" mass="95373">MPAGMTKHGSRSASSLPPEPMEIVRSKACSRRVRLNVGGLAHEVLWRTLDRLPRTRLGKLRDCNTHDSLLEVCDDYSLDDNEYFFDRHPGAFTSILNFYRTGRLHMMEEMCALSFSQELDYWGIDEIYLESCCQARYHQKKEQMNEELKREAETLREREGEEFDNTCCAEKRKKLWDLLEKPNSSVAAKILAIISIMFIVLSTIALSLNTLPELQSLDEFGQTTDNPQLAHVEAVCIAWFTMEYLLRFLSSPKKWKFFKGPLNAIDLLAILPYYVTIFLTESNKSVLQFQNVRRVVQIFRIMRILRILKLARHSTGLQSLGFTLRRSYNELGLLILFLAMGIMIFSSLVFFAEKDEDDTKFKSIPASFWWATITMTTVGYGDIYPKTLLGKIVGGLCCIAGVLVIALPIPIIVNNFSEFYKEQKRQEKAIKRREALERAKRNGSIVSMNMKDAFARSVEMMDIVVEKNGENLAKKEKVQDNHLSPNKWKWTKRTLSETSSSKSFETKEQGSPEKARSSSSPQHLNVQQLEDMYNKMAKTQSQPVLNTKEAAAQSKPKEELEMESIPSPVAPLPTRTEGVIDMRSMSSIDSFISCATDFPEATRFSHSPLASLPTKAGGGAAPELGWRGALGASGGRLVEANPTPDASHGSGFFIESPKSSMKTNNPLKLRALKVNFMAGEPGPLLPVLGMYHDPLRTRGGAAAAVAGLECATLLDKPVLSPESSIYTTASARTPPRSPEKPTAIAFNFEAGVHQYIDADTDDEGQLLYSVDSSPPKSLHGGASPKCSIGARSEKNHFESAPLPTSPKFLRQNCIYSTEGLTGKSLSGQEKCKLGNHISPDVRVLPGGGAHGSTRDQSL</sequence>
<reference key="1">
    <citation type="submission" date="2000-05" db="EMBL/GenBank/DDBJ databases">
        <authorList>
            <person name="Rae J.L."/>
        </authorList>
    </citation>
    <scope>NUCLEOTIDE SEQUENCE [MRNA]</scope>
    <source>
        <strain>New Zealand white</strain>
        <tissue>Corneal endothelium</tissue>
    </source>
</reference>
<reference key="2">
    <citation type="journal article" date="1999" name="Ann. N. Y. Acad. Sci.">
        <title>Molecular diversity of K+ channels.</title>
        <authorList>
            <person name="Coetzee W.A."/>
            <person name="Amarillo Y."/>
            <person name="Chiu J."/>
            <person name="Chow A."/>
            <person name="Lau D."/>
            <person name="McCormack T."/>
            <person name="Moreno H."/>
            <person name="Nadal M.S."/>
            <person name="Ozaita A."/>
            <person name="Pountney D."/>
            <person name="Saganich M."/>
            <person name="Vega-Saenz de Miera E."/>
            <person name="Rudy B."/>
        </authorList>
    </citation>
    <scope>REVIEW</scope>
</reference>
<reference key="3">
    <citation type="journal article" date="2005" name="Cell Biochem. Biophys.">
        <title>Molecular determinants of voltage-gated potassium currents in vascular smooth muscle.</title>
        <authorList>
            <person name="Cox R.H."/>
        </authorList>
    </citation>
    <scope>REVIEW</scope>
</reference>
<name>KCNB1_RABIT</name>